<organism>
    <name type="scientific">Neisseria meningitidis serogroup C (strain 053442)</name>
    <dbReference type="NCBI Taxonomy" id="374833"/>
    <lineage>
        <taxon>Bacteria</taxon>
        <taxon>Pseudomonadati</taxon>
        <taxon>Pseudomonadota</taxon>
        <taxon>Betaproteobacteria</taxon>
        <taxon>Neisseriales</taxon>
        <taxon>Neisseriaceae</taxon>
        <taxon>Neisseria</taxon>
    </lineage>
</organism>
<evidence type="ECO:0000255" key="1">
    <source>
        <dbReference type="HAMAP-Rule" id="MF_01371"/>
    </source>
</evidence>
<evidence type="ECO:0000305" key="2"/>
<proteinExistence type="inferred from homology"/>
<sequence length="61" mass="6946">MAEQKKIRVTLVKSLIGTIESHRACARGLGLRRREHTVEVLDTPENRGMINKISYLLKVES</sequence>
<accession>A9M3U8</accession>
<feature type="chain" id="PRO_1000087256" description="Large ribosomal subunit protein uL30">
    <location>
        <begin position="1"/>
        <end position="61"/>
    </location>
</feature>
<name>RL30_NEIM0</name>
<reference key="1">
    <citation type="journal article" date="2008" name="Genomics">
        <title>Characterization of ST-4821 complex, a unique Neisseria meningitidis clone.</title>
        <authorList>
            <person name="Peng J."/>
            <person name="Yang L."/>
            <person name="Yang F."/>
            <person name="Yang J."/>
            <person name="Yan Y."/>
            <person name="Nie H."/>
            <person name="Zhang X."/>
            <person name="Xiong Z."/>
            <person name="Jiang Y."/>
            <person name="Cheng F."/>
            <person name="Xu X."/>
            <person name="Chen S."/>
            <person name="Sun L."/>
            <person name="Li W."/>
            <person name="Shen Y."/>
            <person name="Shao Z."/>
            <person name="Liang X."/>
            <person name="Xu J."/>
            <person name="Jin Q."/>
        </authorList>
    </citation>
    <scope>NUCLEOTIDE SEQUENCE [LARGE SCALE GENOMIC DNA]</scope>
    <source>
        <strain>053442</strain>
    </source>
</reference>
<protein>
    <recommendedName>
        <fullName evidence="1">Large ribosomal subunit protein uL30</fullName>
    </recommendedName>
    <alternativeName>
        <fullName evidence="2">50S ribosomal protein L30</fullName>
    </alternativeName>
</protein>
<keyword id="KW-0687">Ribonucleoprotein</keyword>
<keyword id="KW-0689">Ribosomal protein</keyword>
<dbReference type="EMBL" id="CP000381">
    <property type="protein sequence ID" value="ABX74112.1"/>
    <property type="molecule type" value="Genomic_DNA"/>
</dbReference>
<dbReference type="RefSeq" id="WP_002215447.1">
    <property type="nucleotide sequence ID" value="NC_010120.1"/>
</dbReference>
<dbReference type="SMR" id="A9M3U8"/>
<dbReference type="GeneID" id="93387235"/>
<dbReference type="KEGG" id="nmn:NMCC_1989"/>
<dbReference type="HOGENOM" id="CLU_131047_1_4_4"/>
<dbReference type="Proteomes" id="UP000001177">
    <property type="component" value="Chromosome"/>
</dbReference>
<dbReference type="GO" id="GO:0022625">
    <property type="term" value="C:cytosolic large ribosomal subunit"/>
    <property type="evidence" value="ECO:0007669"/>
    <property type="project" value="TreeGrafter"/>
</dbReference>
<dbReference type="GO" id="GO:0003735">
    <property type="term" value="F:structural constituent of ribosome"/>
    <property type="evidence" value="ECO:0007669"/>
    <property type="project" value="InterPro"/>
</dbReference>
<dbReference type="GO" id="GO:0006412">
    <property type="term" value="P:translation"/>
    <property type="evidence" value="ECO:0007669"/>
    <property type="project" value="UniProtKB-UniRule"/>
</dbReference>
<dbReference type="CDD" id="cd01658">
    <property type="entry name" value="Ribosomal_L30"/>
    <property type="match status" value="1"/>
</dbReference>
<dbReference type="FunFam" id="3.30.1390.20:FF:000001">
    <property type="entry name" value="50S ribosomal protein L30"/>
    <property type="match status" value="1"/>
</dbReference>
<dbReference type="Gene3D" id="3.30.1390.20">
    <property type="entry name" value="Ribosomal protein L30, ferredoxin-like fold domain"/>
    <property type="match status" value="1"/>
</dbReference>
<dbReference type="HAMAP" id="MF_01371_B">
    <property type="entry name" value="Ribosomal_uL30_B"/>
    <property type="match status" value="1"/>
</dbReference>
<dbReference type="InterPro" id="IPR036919">
    <property type="entry name" value="Ribo_uL30_ferredoxin-like_sf"/>
</dbReference>
<dbReference type="InterPro" id="IPR005996">
    <property type="entry name" value="Ribosomal_uL30_bac-type"/>
</dbReference>
<dbReference type="InterPro" id="IPR016082">
    <property type="entry name" value="Ribosomal_uL30_ferredoxin-like"/>
</dbReference>
<dbReference type="NCBIfam" id="TIGR01308">
    <property type="entry name" value="rpmD_bact"/>
    <property type="match status" value="1"/>
</dbReference>
<dbReference type="PANTHER" id="PTHR15892:SF2">
    <property type="entry name" value="LARGE RIBOSOMAL SUBUNIT PROTEIN UL30M"/>
    <property type="match status" value="1"/>
</dbReference>
<dbReference type="PANTHER" id="PTHR15892">
    <property type="entry name" value="MITOCHONDRIAL RIBOSOMAL PROTEIN L30"/>
    <property type="match status" value="1"/>
</dbReference>
<dbReference type="Pfam" id="PF00327">
    <property type="entry name" value="Ribosomal_L30"/>
    <property type="match status" value="1"/>
</dbReference>
<dbReference type="PIRSF" id="PIRSF002211">
    <property type="entry name" value="Ribosomal_L30_bac-type"/>
    <property type="match status" value="1"/>
</dbReference>
<dbReference type="SUPFAM" id="SSF55129">
    <property type="entry name" value="Ribosomal protein L30p/L7e"/>
    <property type="match status" value="1"/>
</dbReference>
<comment type="subunit">
    <text evidence="1">Part of the 50S ribosomal subunit.</text>
</comment>
<comment type="similarity">
    <text evidence="1">Belongs to the universal ribosomal protein uL30 family.</text>
</comment>
<gene>
    <name evidence="1" type="primary">rpmD</name>
    <name type="ordered locus">NMCC_1989</name>
</gene>